<accession>B5FI28</accession>
<name>KEFF_SALDC</name>
<comment type="function">
    <text evidence="1">Regulatory subunit of a potassium efflux system that confers protection against electrophiles. Required for full activity of KefC. Shows redox enzymatic activity, but this enzymatic activity is not required for activation of KefC.</text>
</comment>
<comment type="catalytic activity">
    <reaction evidence="1">
        <text>a quinone + NADH + H(+) = a quinol + NAD(+)</text>
        <dbReference type="Rhea" id="RHEA:46160"/>
        <dbReference type="ChEBI" id="CHEBI:15378"/>
        <dbReference type="ChEBI" id="CHEBI:24646"/>
        <dbReference type="ChEBI" id="CHEBI:57540"/>
        <dbReference type="ChEBI" id="CHEBI:57945"/>
        <dbReference type="ChEBI" id="CHEBI:132124"/>
        <dbReference type="EC" id="1.6.5.2"/>
    </reaction>
</comment>
<comment type="catalytic activity">
    <reaction evidence="1">
        <text>a quinone + NADPH + H(+) = a quinol + NADP(+)</text>
        <dbReference type="Rhea" id="RHEA:46164"/>
        <dbReference type="ChEBI" id="CHEBI:15378"/>
        <dbReference type="ChEBI" id="CHEBI:24646"/>
        <dbReference type="ChEBI" id="CHEBI:57783"/>
        <dbReference type="ChEBI" id="CHEBI:58349"/>
        <dbReference type="ChEBI" id="CHEBI:132124"/>
        <dbReference type="EC" id="1.6.5.2"/>
    </reaction>
</comment>
<comment type="cofactor">
    <cofactor evidence="1">
        <name>FMN</name>
        <dbReference type="ChEBI" id="CHEBI:58210"/>
    </cofactor>
</comment>
<comment type="subunit">
    <text evidence="1">Homodimer. Interacts with KefC.</text>
</comment>
<comment type="subcellular location">
    <subcellularLocation>
        <location evidence="1">Cell inner membrane</location>
        <topology evidence="1">Peripheral membrane protein</topology>
        <orientation evidence="1">Cytoplasmic side</orientation>
    </subcellularLocation>
</comment>
<comment type="similarity">
    <text evidence="1">Belongs to the NAD(P)H dehydrogenase (quinone) family. KefF subfamily.</text>
</comment>
<organism>
    <name type="scientific">Salmonella dublin (strain CT_02021853)</name>
    <dbReference type="NCBI Taxonomy" id="439851"/>
    <lineage>
        <taxon>Bacteria</taxon>
        <taxon>Pseudomonadati</taxon>
        <taxon>Pseudomonadota</taxon>
        <taxon>Gammaproteobacteria</taxon>
        <taxon>Enterobacterales</taxon>
        <taxon>Enterobacteriaceae</taxon>
        <taxon>Salmonella</taxon>
    </lineage>
</organism>
<proteinExistence type="inferred from homology"/>
<feature type="chain" id="PRO_1000145564" description="Glutathione-regulated potassium-efflux system ancillary protein KefF">
    <location>
        <begin position="1"/>
        <end position="176"/>
    </location>
</feature>
<feature type="binding site" evidence="1">
    <location>
        <position position="8"/>
    </location>
    <ligand>
        <name>FMN</name>
        <dbReference type="ChEBI" id="CHEBI:58210"/>
    </ligand>
</feature>
<feature type="binding site" evidence="1">
    <location>
        <begin position="14"/>
        <end position="17"/>
    </location>
    <ligand>
        <name>FMN</name>
        <dbReference type="ChEBI" id="CHEBI:58210"/>
    </ligand>
</feature>
<feature type="binding site" evidence="1">
    <location>
        <begin position="65"/>
        <end position="68"/>
    </location>
    <ligand>
        <name>FMN</name>
        <dbReference type="ChEBI" id="CHEBI:58210"/>
    </ligand>
</feature>
<feature type="binding site" evidence="1">
    <location>
        <begin position="105"/>
        <end position="108"/>
    </location>
    <ligand>
        <name>FMN</name>
        <dbReference type="ChEBI" id="CHEBI:58210"/>
    </ligand>
</feature>
<protein>
    <recommendedName>
        <fullName evidence="1">Glutathione-regulated potassium-efflux system ancillary protein KefF</fullName>
    </recommendedName>
    <alternativeName>
        <fullName evidence="1">Quinone oxidoreductase KefF</fullName>
        <ecNumber evidence="1">1.6.5.2</ecNumber>
    </alternativeName>
</protein>
<reference key="1">
    <citation type="journal article" date="2011" name="J. Bacteriol.">
        <title>Comparative genomics of 28 Salmonella enterica isolates: evidence for CRISPR-mediated adaptive sublineage evolution.</title>
        <authorList>
            <person name="Fricke W.F."/>
            <person name="Mammel M.K."/>
            <person name="McDermott P.F."/>
            <person name="Tartera C."/>
            <person name="White D.G."/>
            <person name="Leclerc J.E."/>
            <person name="Ravel J."/>
            <person name="Cebula T.A."/>
        </authorList>
    </citation>
    <scope>NUCLEOTIDE SEQUENCE [LARGE SCALE GENOMIC DNA]</scope>
    <source>
        <strain>CT_02021853</strain>
    </source>
</reference>
<dbReference type="EC" id="1.6.5.2" evidence="1"/>
<dbReference type="EMBL" id="CP001144">
    <property type="protein sequence ID" value="ACH76690.1"/>
    <property type="molecule type" value="Genomic_DNA"/>
</dbReference>
<dbReference type="RefSeq" id="WP_000600698.1">
    <property type="nucleotide sequence ID" value="NC_011205.1"/>
</dbReference>
<dbReference type="SMR" id="B5FI28"/>
<dbReference type="KEGG" id="sed:SeD_A0088"/>
<dbReference type="HOGENOM" id="CLU_058643_0_2_6"/>
<dbReference type="Proteomes" id="UP000008322">
    <property type="component" value="Chromosome"/>
</dbReference>
<dbReference type="GO" id="GO:0005886">
    <property type="term" value="C:plasma membrane"/>
    <property type="evidence" value="ECO:0007669"/>
    <property type="project" value="UniProtKB-SubCell"/>
</dbReference>
<dbReference type="GO" id="GO:0009055">
    <property type="term" value="F:electron transfer activity"/>
    <property type="evidence" value="ECO:0007669"/>
    <property type="project" value="TreeGrafter"/>
</dbReference>
<dbReference type="GO" id="GO:0010181">
    <property type="term" value="F:FMN binding"/>
    <property type="evidence" value="ECO:0007669"/>
    <property type="project" value="UniProtKB-UniRule"/>
</dbReference>
<dbReference type="GO" id="GO:0050136">
    <property type="term" value="F:NADH:ubiquinone reductase (non-electrogenic) activity"/>
    <property type="evidence" value="ECO:0007669"/>
    <property type="project" value="RHEA"/>
</dbReference>
<dbReference type="GO" id="GO:0008753">
    <property type="term" value="F:NADPH dehydrogenase (quinone) activity"/>
    <property type="evidence" value="ECO:0007669"/>
    <property type="project" value="RHEA"/>
</dbReference>
<dbReference type="GO" id="GO:1901381">
    <property type="term" value="P:positive regulation of potassium ion transmembrane transport"/>
    <property type="evidence" value="ECO:0007669"/>
    <property type="project" value="UniProtKB-UniRule"/>
</dbReference>
<dbReference type="GO" id="GO:0006813">
    <property type="term" value="P:potassium ion transport"/>
    <property type="evidence" value="ECO:0007669"/>
    <property type="project" value="InterPro"/>
</dbReference>
<dbReference type="FunFam" id="3.40.50.360:FF:000008">
    <property type="entry name" value="Glutathione-regulated potassium-efflux system ancillary protein KefF"/>
    <property type="match status" value="1"/>
</dbReference>
<dbReference type="Gene3D" id="3.40.50.360">
    <property type="match status" value="1"/>
</dbReference>
<dbReference type="HAMAP" id="MF_01414">
    <property type="entry name" value="K_H_efflux_KefF"/>
    <property type="match status" value="1"/>
</dbReference>
<dbReference type="InterPro" id="IPR003680">
    <property type="entry name" value="Flavodoxin_fold"/>
</dbReference>
<dbReference type="InterPro" id="IPR029039">
    <property type="entry name" value="Flavoprotein-like_sf"/>
</dbReference>
<dbReference type="InterPro" id="IPR023948">
    <property type="entry name" value="K_H_efflux_KefF"/>
</dbReference>
<dbReference type="InterPro" id="IPR046980">
    <property type="entry name" value="KefG/KefF"/>
</dbReference>
<dbReference type="NCBIfam" id="NF002044">
    <property type="entry name" value="PRK00871.1"/>
    <property type="match status" value="1"/>
</dbReference>
<dbReference type="PANTHER" id="PTHR47307:SF2">
    <property type="entry name" value="GLUTATHIONE-REGULATED POTASSIUM-EFFLUX SYSTEM ANCILLARY PROTEIN KEFF"/>
    <property type="match status" value="1"/>
</dbReference>
<dbReference type="PANTHER" id="PTHR47307">
    <property type="entry name" value="GLUTATHIONE-REGULATED POTASSIUM-EFFLUX SYSTEM ANCILLARY PROTEIN KEFG"/>
    <property type="match status" value="1"/>
</dbReference>
<dbReference type="Pfam" id="PF02525">
    <property type="entry name" value="Flavodoxin_2"/>
    <property type="match status" value="1"/>
</dbReference>
<dbReference type="SUPFAM" id="SSF52218">
    <property type="entry name" value="Flavoproteins"/>
    <property type="match status" value="1"/>
</dbReference>
<sequence>MILIIYAHPYPHHSHANKQMLEQAGTLENVEIRSLYHLYPDFNIDVAAEQEALSRASLIVWQHPMQWYSVPPLLKLWMDKVLTHGWAYGHGGTALHGKHLLWAVTTGGGENHFTIGSHPGFDVLSQPLQATALYCGLKWLPPFSMHCTFICDDDTLQAQARQYKQRLLAWQEVNHG</sequence>
<gene>
    <name evidence="1" type="primary">kefF</name>
    <name type="ordered locus">SeD_A0088</name>
</gene>
<keyword id="KW-0997">Cell inner membrane</keyword>
<keyword id="KW-1003">Cell membrane</keyword>
<keyword id="KW-0285">Flavoprotein</keyword>
<keyword id="KW-0288">FMN</keyword>
<keyword id="KW-0472">Membrane</keyword>
<keyword id="KW-0520">NAD</keyword>
<keyword id="KW-0560">Oxidoreductase</keyword>
<evidence type="ECO:0000255" key="1">
    <source>
        <dbReference type="HAMAP-Rule" id="MF_01414"/>
    </source>
</evidence>